<name>LDHA_SCEUN</name>
<protein>
    <recommendedName>
        <fullName>L-lactate dehydrogenase A chain</fullName>
        <shortName>LDH-A</shortName>
        <ecNumber evidence="2">1.1.1.27</ecNumber>
    </recommendedName>
</protein>
<dbReference type="EC" id="1.1.1.27" evidence="2"/>
<dbReference type="EMBL" id="AF072583">
    <property type="protein sequence ID" value="AAD41640.1"/>
    <property type="molecule type" value="mRNA"/>
</dbReference>
<dbReference type="SMR" id="Q9W7L5"/>
<dbReference type="UniPathway" id="UPA00554">
    <property type="reaction ID" value="UER00611"/>
</dbReference>
<dbReference type="GO" id="GO:0005737">
    <property type="term" value="C:cytoplasm"/>
    <property type="evidence" value="ECO:0007669"/>
    <property type="project" value="UniProtKB-SubCell"/>
</dbReference>
<dbReference type="GO" id="GO:0004459">
    <property type="term" value="F:L-lactate dehydrogenase activity"/>
    <property type="evidence" value="ECO:0007669"/>
    <property type="project" value="UniProtKB-EC"/>
</dbReference>
<dbReference type="GO" id="GO:0006089">
    <property type="term" value="P:lactate metabolic process"/>
    <property type="evidence" value="ECO:0007669"/>
    <property type="project" value="TreeGrafter"/>
</dbReference>
<dbReference type="CDD" id="cd05293">
    <property type="entry name" value="LDH_1"/>
    <property type="match status" value="1"/>
</dbReference>
<dbReference type="FunFam" id="3.40.50.720:FF:000029">
    <property type="entry name" value="L-lactate dehydrogenase A chain"/>
    <property type="match status" value="1"/>
</dbReference>
<dbReference type="FunFam" id="3.90.110.10:FF:000003">
    <property type="entry name" value="L-lactate dehydrogenase A chain"/>
    <property type="match status" value="1"/>
</dbReference>
<dbReference type="Gene3D" id="3.90.110.10">
    <property type="entry name" value="Lactate dehydrogenase/glycoside hydrolase, family 4, C-terminal"/>
    <property type="match status" value="1"/>
</dbReference>
<dbReference type="Gene3D" id="3.40.50.720">
    <property type="entry name" value="NAD(P)-binding Rossmann-like Domain"/>
    <property type="match status" value="1"/>
</dbReference>
<dbReference type="HAMAP" id="MF_00488">
    <property type="entry name" value="Lactate_dehydrog"/>
    <property type="match status" value="1"/>
</dbReference>
<dbReference type="InterPro" id="IPR001557">
    <property type="entry name" value="L-lactate/malate_DH"/>
</dbReference>
<dbReference type="InterPro" id="IPR011304">
    <property type="entry name" value="L-lactate_DH"/>
</dbReference>
<dbReference type="InterPro" id="IPR018177">
    <property type="entry name" value="L-lactate_DH_AS"/>
</dbReference>
<dbReference type="InterPro" id="IPR022383">
    <property type="entry name" value="Lactate/malate_DH_C"/>
</dbReference>
<dbReference type="InterPro" id="IPR001236">
    <property type="entry name" value="Lactate/malate_DH_N"/>
</dbReference>
<dbReference type="InterPro" id="IPR015955">
    <property type="entry name" value="Lactate_DH/Glyco_Ohase_4_C"/>
</dbReference>
<dbReference type="InterPro" id="IPR036291">
    <property type="entry name" value="NAD(P)-bd_dom_sf"/>
</dbReference>
<dbReference type="NCBIfam" id="TIGR01771">
    <property type="entry name" value="L-LDH-NAD"/>
    <property type="match status" value="1"/>
</dbReference>
<dbReference type="PANTHER" id="PTHR43128">
    <property type="entry name" value="L-2-HYDROXYCARBOXYLATE DEHYDROGENASE (NAD(P)(+))"/>
    <property type="match status" value="1"/>
</dbReference>
<dbReference type="PANTHER" id="PTHR43128:SF10">
    <property type="entry name" value="L-LACTATE DEHYDROGENASE A CHAIN"/>
    <property type="match status" value="1"/>
</dbReference>
<dbReference type="Pfam" id="PF02866">
    <property type="entry name" value="Ldh_1_C"/>
    <property type="match status" value="1"/>
</dbReference>
<dbReference type="Pfam" id="PF00056">
    <property type="entry name" value="Ldh_1_N"/>
    <property type="match status" value="1"/>
</dbReference>
<dbReference type="PIRSF" id="PIRSF000102">
    <property type="entry name" value="Lac_mal_DH"/>
    <property type="match status" value="1"/>
</dbReference>
<dbReference type="PRINTS" id="PR00086">
    <property type="entry name" value="LLDHDRGNASE"/>
</dbReference>
<dbReference type="SUPFAM" id="SSF56327">
    <property type="entry name" value="LDH C-terminal domain-like"/>
    <property type="match status" value="1"/>
</dbReference>
<dbReference type="SUPFAM" id="SSF51735">
    <property type="entry name" value="NAD(P)-binding Rossmann-fold domains"/>
    <property type="match status" value="1"/>
</dbReference>
<dbReference type="PROSITE" id="PS00064">
    <property type="entry name" value="L_LDH"/>
    <property type="match status" value="1"/>
</dbReference>
<organism>
    <name type="scientific">Sceloporus undulatus</name>
    <name type="common">Eastern fence lizard</name>
    <name type="synonym">Stellio undulatus</name>
    <dbReference type="NCBI Taxonomy" id="8520"/>
    <lineage>
        <taxon>Eukaryota</taxon>
        <taxon>Metazoa</taxon>
        <taxon>Chordata</taxon>
        <taxon>Craniata</taxon>
        <taxon>Vertebrata</taxon>
        <taxon>Euteleostomi</taxon>
        <taxon>Lepidosauria</taxon>
        <taxon>Squamata</taxon>
        <taxon>Bifurcata</taxon>
        <taxon>Unidentata</taxon>
        <taxon>Episquamata</taxon>
        <taxon>Toxicofera</taxon>
        <taxon>Iguania</taxon>
        <taxon>Phrynosomatidae</taxon>
        <taxon>Phrynosomatinae</taxon>
        <taxon>Sceloporus</taxon>
    </lineage>
</organism>
<proteinExistence type="evidence at transcript level"/>
<sequence>MSLKEKLIEKVHTEEHPHAHNKITVVGVGAVGMACAISILMKDLADELALVDVMEDKLKGEMLDLQHGSLFLKTPKIVSGKDYAVTAHSKLVIITAGARQQEGESRLNLVQRNVNIFKFIIPNVVKYSPDCKLLVVSNPVDILTYVAWKISGFPKHRVIGSGCNLDSARFRHLMGERLHINPLSCHGWIVGEHGDSSVPVWSGVNVAGVSLKSLHPEMGADGDKENWKDVHKQVVESAYEVIKLKGYTSWAIGLSVADLAETVMKNLRRVHPVSTMVKGMHGIKDDVFLSVPCVLGYSGITDVVKMTLKPEEEDKLKKSADTLWGIEKELQF</sequence>
<accession>Q9W7L5</accession>
<feature type="initiator methionine" description="Removed" evidence="1">
    <location>
        <position position="1"/>
    </location>
</feature>
<feature type="chain" id="PRO_0000168426" description="L-lactate dehydrogenase A chain">
    <location>
        <begin position="2"/>
        <end position="332"/>
    </location>
</feature>
<feature type="active site" description="Proton acceptor" evidence="1">
    <location>
        <position position="193"/>
    </location>
</feature>
<feature type="binding site" evidence="1">
    <location>
        <begin position="29"/>
        <end position="57"/>
    </location>
    <ligand>
        <name>NAD(+)</name>
        <dbReference type="ChEBI" id="CHEBI:57540"/>
    </ligand>
</feature>
<feature type="binding site" evidence="1">
    <location>
        <position position="99"/>
    </location>
    <ligand>
        <name>NAD(+)</name>
        <dbReference type="ChEBI" id="CHEBI:57540"/>
    </ligand>
</feature>
<feature type="binding site" evidence="1">
    <location>
        <position position="106"/>
    </location>
    <ligand>
        <name>substrate</name>
    </ligand>
</feature>
<feature type="binding site" evidence="1">
    <location>
        <position position="138"/>
    </location>
    <ligand>
        <name>NAD(+)</name>
        <dbReference type="ChEBI" id="CHEBI:57540"/>
    </ligand>
</feature>
<feature type="binding site" evidence="1">
    <location>
        <position position="138"/>
    </location>
    <ligand>
        <name>substrate</name>
    </ligand>
</feature>
<feature type="binding site" evidence="1">
    <location>
        <position position="169"/>
    </location>
    <ligand>
        <name>substrate</name>
    </ligand>
</feature>
<feature type="binding site" evidence="1">
    <location>
        <position position="248"/>
    </location>
    <ligand>
        <name>substrate</name>
    </ligand>
</feature>
<keyword id="KW-0963">Cytoplasm</keyword>
<keyword id="KW-0520">NAD</keyword>
<keyword id="KW-0560">Oxidoreductase</keyword>
<gene>
    <name type="primary">LDHA</name>
</gene>
<comment type="function">
    <text evidence="2">Interconverts simultaneously and stereospecifically pyruvate and lactate with concomitant interconversion of NADH and NAD(+).</text>
</comment>
<comment type="catalytic activity">
    <reaction evidence="2">
        <text>(S)-lactate + NAD(+) = pyruvate + NADH + H(+)</text>
        <dbReference type="Rhea" id="RHEA:23444"/>
        <dbReference type="ChEBI" id="CHEBI:15361"/>
        <dbReference type="ChEBI" id="CHEBI:15378"/>
        <dbReference type="ChEBI" id="CHEBI:16651"/>
        <dbReference type="ChEBI" id="CHEBI:57540"/>
        <dbReference type="ChEBI" id="CHEBI:57945"/>
        <dbReference type="EC" id="1.1.1.27"/>
    </reaction>
    <physiologicalReaction direction="left-to-right" evidence="2">
        <dbReference type="Rhea" id="RHEA:23445"/>
    </physiologicalReaction>
    <physiologicalReaction direction="right-to-left" evidence="2">
        <dbReference type="Rhea" id="RHEA:23446"/>
    </physiologicalReaction>
</comment>
<comment type="pathway">
    <text evidence="2">Fermentation; pyruvate fermentation to lactate; (S)-lactate from pyruvate: step 1/1.</text>
</comment>
<comment type="subunit">
    <text evidence="1">Homotetramer.</text>
</comment>
<comment type="subcellular location">
    <subcellularLocation>
        <location evidence="1">Cytoplasm</location>
    </subcellularLocation>
</comment>
<comment type="similarity">
    <text evidence="3">Belongs to the LDH/MDH superfamily. LDH family.</text>
</comment>
<evidence type="ECO:0000250" key="1"/>
<evidence type="ECO:0000250" key="2">
    <source>
        <dbReference type="UniProtKB" id="P00338"/>
    </source>
</evidence>
<evidence type="ECO:0000305" key="3"/>
<reference key="1">
    <citation type="journal article" date="1999" name="Mol. Phylogenet. Evol.">
        <title>Molecular evidence for a clade of turtles.</title>
        <authorList>
            <person name="Mannen H."/>
            <person name="Li S.S.-L."/>
        </authorList>
    </citation>
    <scope>NUCLEOTIDE SEQUENCE [MRNA]</scope>
    <source>
        <tissue>Muscle</tissue>
    </source>
</reference>